<reference key="1">
    <citation type="submission" date="2005-09" db="EMBL/GenBank/DDBJ databases">
        <title>Complete sequence of chromosome 1 of Rhodobacter sphaeroides 2.4.1.</title>
        <authorList>
            <person name="Copeland A."/>
            <person name="Lucas S."/>
            <person name="Lapidus A."/>
            <person name="Barry K."/>
            <person name="Detter J.C."/>
            <person name="Glavina T."/>
            <person name="Hammon N."/>
            <person name="Israni S."/>
            <person name="Pitluck S."/>
            <person name="Richardson P."/>
            <person name="Mackenzie C."/>
            <person name="Choudhary M."/>
            <person name="Larimer F."/>
            <person name="Hauser L.J."/>
            <person name="Land M."/>
            <person name="Donohue T.J."/>
            <person name="Kaplan S."/>
        </authorList>
    </citation>
    <scope>NUCLEOTIDE SEQUENCE [LARGE SCALE GENOMIC DNA]</scope>
    <source>
        <strain>ATCC 17023 / DSM 158 / JCM 6121 / CCUG 31486 / LMG 2827 / NBRC 12203 / NCIMB 8253 / ATH 2.4.1.</strain>
    </source>
</reference>
<name>PUR5_CERS4</name>
<proteinExistence type="inferred from homology"/>
<comment type="catalytic activity">
    <reaction evidence="1">
        <text>2-formamido-N(1)-(5-O-phospho-beta-D-ribosyl)acetamidine + ATP = 5-amino-1-(5-phospho-beta-D-ribosyl)imidazole + ADP + phosphate + H(+)</text>
        <dbReference type="Rhea" id="RHEA:23032"/>
        <dbReference type="ChEBI" id="CHEBI:15378"/>
        <dbReference type="ChEBI" id="CHEBI:30616"/>
        <dbReference type="ChEBI" id="CHEBI:43474"/>
        <dbReference type="ChEBI" id="CHEBI:137981"/>
        <dbReference type="ChEBI" id="CHEBI:147287"/>
        <dbReference type="ChEBI" id="CHEBI:456216"/>
        <dbReference type="EC" id="6.3.3.1"/>
    </reaction>
</comment>
<comment type="pathway">
    <text evidence="1">Purine metabolism; IMP biosynthesis via de novo pathway; 5-amino-1-(5-phospho-D-ribosyl)imidazole from N(2)-formyl-N(1)-(5-phospho-D-ribosyl)glycinamide: step 2/2.</text>
</comment>
<comment type="subcellular location">
    <subcellularLocation>
        <location evidence="1">Cytoplasm</location>
    </subcellularLocation>
</comment>
<comment type="similarity">
    <text evidence="1">Belongs to the AIR synthase family.</text>
</comment>
<sequence length="348" mass="35762">MAEQQKGLTYADAGVDIDAGNALVERIKPAAKRTARPGTVSGLGGFGALFDLKAAGYQDPVLVAATDGVGTKLRIAIDTGEVDTIGIDLVAMCVNDLVCQGAEPLFFLDYFATGKLEVAQAARIIEGIAEGCAASGCALIGGETAEMPGMYHKGDFDLAGFAVGAMERGADLPQGVAEGDLLLGLGSNGVHSNGYSFVRKVVELSGLGWDAPAPFGGDSLGRALLAPTRLYVKQALAAVRAGGVHALAHITGGGLTENLPRVLPKGLGARIDLSAWELPPVFRWLAETASMAEPELLKTFNCGIGMIVVVAADRADEIAALLAAEGETVTRIGEVIAGEGVSYDGRLL</sequence>
<accession>Q3J517</accession>
<evidence type="ECO:0000255" key="1">
    <source>
        <dbReference type="HAMAP-Rule" id="MF_00741"/>
    </source>
</evidence>
<feature type="chain" id="PRO_0000258393" description="Phosphoribosylformylglycinamidine cyclo-ligase">
    <location>
        <begin position="1"/>
        <end position="348"/>
    </location>
</feature>
<organism>
    <name type="scientific">Cereibacter sphaeroides (strain ATCC 17023 / DSM 158 / JCM 6121 / CCUG 31486 / LMG 2827 / NBRC 12203 / NCIMB 8253 / ATH 2.4.1.)</name>
    <name type="common">Rhodobacter sphaeroides</name>
    <dbReference type="NCBI Taxonomy" id="272943"/>
    <lineage>
        <taxon>Bacteria</taxon>
        <taxon>Pseudomonadati</taxon>
        <taxon>Pseudomonadota</taxon>
        <taxon>Alphaproteobacteria</taxon>
        <taxon>Rhodobacterales</taxon>
        <taxon>Paracoccaceae</taxon>
        <taxon>Cereibacter</taxon>
    </lineage>
</organism>
<dbReference type="EC" id="6.3.3.1" evidence="1"/>
<dbReference type="EMBL" id="CP000143">
    <property type="protein sequence ID" value="ABA78117.1"/>
    <property type="molecule type" value="Genomic_DNA"/>
</dbReference>
<dbReference type="RefSeq" id="WP_011337122.1">
    <property type="nucleotide sequence ID" value="NC_007493.2"/>
</dbReference>
<dbReference type="RefSeq" id="YP_352018.1">
    <property type="nucleotide sequence ID" value="NC_007493.2"/>
</dbReference>
<dbReference type="SMR" id="Q3J517"/>
<dbReference type="STRING" id="272943.RSP_1969"/>
<dbReference type="EnsemblBacteria" id="ABA78117">
    <property type="protein sequence ID" value="ABA78117"/>
    <property type="gene ID" value="RSP_1969"/>
</dbReference>
<dbReference type="GeneID" id="3719300"/>
<dbReference type="KEGG" id="rsp:RSP_1969"/>
<dbReference type="PATRIC" id="fig|272943.9.peg.857"/>
<dbReference type="eggNOG" id="COG0150">
    <property type="taxonomic scope" value="Bacteria"/>
</dbReference>
<dbReference type="OrthoDB" id="9777881at2"/>
<dbReference type="PhylomeDB" id="Q3J517"/>
<dbReference type="UniPathway" id="UPA00074">
    <property type="reaction ID" value="UER00129"/>
</dbReference>
<dbReference type="Proteomes" id="UP000002703">
    <property type="component" value="Chromosome 1"/>
</dbReference>
<dbReference type="GO" id="GO:0005829">
    <property type="term" value="C:cytosol"/>
    <property type="evidence" value="ECO:0007669"/>
    <property type="project" value="TreeGrafter"/>
</dbReference>
<dbReference type="GO" id="GO:0005524">
    <property type="term" value="F:ATP binding"/>
    <property type="evidence" value="ECO:0007669"/>
    <property type="project" value="UniProtKB-KW"/>
</dbReference>
<dbReference type="GO" id="GO:0004637">
    <property type="term" value="F:phosphoribosylamine-glycine ligase activity"/>
    <property type="evidence" value="ECO:0007669"/>
    <property type="project" value="TreeGrafter"/>
</dbReference>
<dbReference type="GO" id="GO:0004641">
    <property type="term" value="F:phosphoribosylformylglycinamidine cyclo-ligase activity"/>
    <property type="evidence" value="ECO:0007669"/>
    <property type="project" value="UniProtKB-UniRule"/>
</dbReference>
<dbReference type="GO" id="GO:0006189">
    <property type="term" value="P:'de novo' IMP biosynthetic process"/>
    <property type="evidence" value="ECO:0007669"/>
    <property type="project" value="UniProtKB-UniRule"/>
</dbReference>
<dbReference type="GO" id="GO:0046084">
    <property type="term" value="P:adenine biosynthetic process"/>
    <property type="evidence" value="ECO:0007669"/>
    <property type="project" value="TreeGrafter"/>
</dbReference>
<dbReference type="CDD" id="cd02196">
    <property type="entry name" value="PurM"/>
    <property type="match status" value="1"/>
</dbReference>
<dbReference type="FunFam" id="3.30.1330.10:FF:000001">
    <property type="entry name" value="Phosphoribosylformylglycinamidine cyclo-ligase"/>
    <property type="match status" value="1"/>
</dbReference>
<dbReference type="FunFam" id="3.90.650.10:FF:000011">
    <property type="entry name" value="Phosphoribosylformylglycinamidine cyclo-ligase"/>
    <property type="match status" value="1"/>
</dbReference>
<dbReference type="Gene3D" id="3.90.650.10">
    <property type="entry name" value="PurM-like C-terminal domain"/>
    <property type="match status" value="1"/>
</dbReference>
<dbReference type="Gene3D" id="3.30.1330.10">
    <property type="entry name" value="PurM-like, N-terminal domain"/>
    <property type="match status" value="1"/>
</dbReference>
<dbReference type="HAMAP" id="MF_00741">
    <property type="entry name" value="AIRS"/>
    <property type="match status" value="1"/>
</dbReference>
<dbReference type="InterPro" id="IPR010918">
    <property type="entry name" value="PurM-like_C_dom"/>
</dbReference>
<dbReference type="InterPro" id="IPR036676">
    <property type="entry name" value="PurM-like_C_sf"/>
</dbReference>
<dbReference type="InterPro" id="IPR016188">
    <property type="entry name" value="PurM-like_N"/>
</dbReference>
<dbReference type="InterPro" id="IPR036921">
    <property type="entry name" value="PurM-like_N_sf"/>
</dbReference>
<dbReference type="InterPro" id="IPR004733">
    <property type="entry name" value="PurM_cligase"/>
</dbReference>
<dbReference type="NCBIfam" id="TIGR00878">
    <property type="entry name" value="purM"/>
    <property type="match status" value="1"/>
</dbReference>
<dbReference type="PANTHER" id="PTHR10520:SF12">
    <property type="entry name" value="TRIFUNCTIONAL PURINE BIOSYNTHETIC PROTEIN ADENOSINE-3"/>
    <property type="match status" value="1"/>
</dbReference>
<dbReference type="PANTHER" id="PTHR10520">
    <property type="entry name" value="TRIFUNCTIONAL PURINE BIOSYNTHETIC PROTEIN ADENOSINE-3-RELATED"/>
    <property type="match status" value="1"/>
</dbReference>
<dbReference type="Pfam" id="PF00586">
    <property type="entry name" value="AIRS"/>
    <property type="match status" value="1"/>
</dbReference>
<dbReference type="Pfam" id="PF02769">
    <property type="entry name" value="AIRS_C"/>
    <property type="match status" value="1"/>
</dbReference>
<dbReference type="SUPFAM" id="SSF56042">
    <property type="entry name" value="PurM C-terminal domain-like"/>
    <property type="match status" value="1"/>
</dbReference>
<dbReference type="SUPFAM" id="SSF55326">
    <property type="entry name" value="PurM N-terminal domain-like"/>
    <property type="match status" value="1"/>
</dbReference>
<gene>
    <name evidence="1" type="primary">purM</name>
    <name type="ordered locus">RHOS4_05490</name>
    <name type="ORF">RSP_1969</name>
</gene>
<protein>
    <recommendedName>
        <fullName evidence="1">Phosphoribosylformylglycinamidine cyclo-ligase</fullName>
        <ecNumber evidence="1">6.3.3.1</ecNumber>
    </recommendedName>
    <alternativeName>
        <fullName evidence="1">AIR synthase</fullName>
    </alternativeName>
    <alternativeName>
        <fullName evidence="1">AIRS</fullName>
    </alternativeName>
    <alternativeName>
        <fullName evidence="1">Phosphoribosyl-aminoimidazole synthetase</fullName>
    </alternativeName>
</protein>
<keyword id="KW-0067">ATP-binding</keyword>
<keyword id="KW-0963">Cytoplasm</keyword>
<keyword id="KW-0436">Ligase</keyword>
<keyword id="KW-0547">Nucleotide-binding</keyword>
<keyword id="KW-0658">Purine biosynthesis</keyword>
<keyword id="KW-1185">Reference proteome</keyword>